<accession>A4YA10</accession>
<feature type="chain" id="PRO_1000022313" description="Potassium-transporting ATPase KdpC subunit">
    <location>
        <begin position="1"/>
        <end position="199"/>
    </location>
</feature>
<feature type="transmembrane region" description="Helical" evidence="1">
    <location>
        <begin position="21"/>
        <end position="43"/>
    </location>
</feature>
<reference key="1">
    <citation type="submission" date="2007-04" db="EMBL/GenBank/DDBJ databases">
        <title>Complete sequence of Shewanella putrefaciens CN-32.</title>
        <authorList>
            <consortium name="US DOE Joint Genome Institute"/>
            <person name="Copeland A."/>
            <person name="Lucas S."/>
            <person name="Lapidus A."/>
            <person name="Barry K."/>
            <person name="Detter J.C."/>
            <person name="Glavina del Rio T."/>
            <person name="Hammon N."/>
            <person name="Israni S."/>
            <person name="Dalin E."/>
            <person name="Tice H."/>
            <person name="Pitluck S."/>
            <person name="Chain P."/>
            <person name="Malfatti S."/>
            <person name="Shin M."/>
            <person name="Vergez L."/>
            <person name="Schmutz J."/>
            <person name="Larimer F."/>
            <person name="Land M."/>
            <person name="Hauser L."/>
            <person name="Kyrpides N."/>
            <person name="Mikhailova N."/>
            <person name="Romine M.F."/>
            <person name="Fredrickson J."/>
            <person name="Tiedje J."/>
            <person name="Richardson P."/>
        </authorList>
    </citation>
    <scope>NUCLEOTIDE SEQUENCE [LARGE SCALE GENOMIC DNA]</scope>
    <source>
        <strain>CN-32 / ATCC BAA-453</strain>
    </source>
</reference>
<gene>
    <name evidence="1" type="primary">kdpC</name>
    <name type="ordered locus">Sputcn32_3080</name>
</gene>
<dbReference type="EMBL" id="CP000681">
    <property type="protein sequence ID" value="ABP76793.1"/>
    <property type="molecule type" value="Genomic_DNA"/>
</dbReference>
<dbReference type="SMR" id="A4YA10"/>
<dbReference type="STRING" id="319224.Sputcn32_3080"/>
<dbReference type="KEGG" id="spc:Sputcn32_3080"/>
<dbReference type="eggNOG" id="COG2156">
    <property type="taxonomic scope" value="Bacteria"/>
</dbReference>
<dbReference type="HOGENOM" id="CLU_077094_2_0_6"/>
<dbReference type="GO" id="GO:0005886">
    <property type="term" value="C:plasma membrane"/>
    <property type="evidence" value="ECO:0007669"/>
    <property type="project" value="UniProtKB-SubCell"/>
</dbReference>
<dbReference type="GO" id="GO:0005524">
    <property type="term" value="F:ATP binding"/>
    <property type="evidence" value="ECO:0007669"/>
    <property type="project" value="UniProtKB-UniRule"/>
</dbReference>
<dbReference type="GO" id="GO:0008556">
    <property type="term" value="F:P-type potassium transmembrane transporter activity"/>
    <property type="evidence" value="ECO:0007669"/>
    <property type="project" value="InterPro"/>
</dbReference>
<dbReference type="HAMAP" id="MF_00276">
    <property type="entry name" value="KdpC"/>
    <property type="match status" value="1"/>
</dbReference>
<dbReference type="InterPro" id="IPR003820">
    <property type="entry name" value="KdpC"/>
</dbReference>
<dbReference type="NCBIfam" id="TIGR00681">
    <property type="entry name" value="kdpC"/>
    <property type="match status" value="1"/>
</dbReference>
<dbReference type="NCBIfam" id="NF001454">
    <property type="entry name" value="PRK00315.1"/>
    <property type="match status" value="1"/>
</dbReference>
<dbReference type="PANTHER" id="PTHR30042">
    <property type="entry name" value="POTASSIUM-TRANSPORTING ATPASE C CHAIN"/>
    <property type="match status" value="1"/>
</dbReference>
<dbReference type="PANTHER" id="PTHR30042:SF2">
    <property type="entry name" value="POTASSIUM-TRANSPORTING ATPASE KDPC SUBUNIT"/>
    <property type="match status" value="1"/>
</dbReference>
<dbReference type="Pfam" id="PF02669">
    <property type="entry name" value="KdpC"/>
    <property type="match status" value="1"/>
</dbReference>
<dbReference type="PIRSF" id="PIRSF001296">
    <property type="entry name" value="K_ATPase_KdpC"/>
    <property type="match status" value="1"/>
</dbReference>
<comment type="function">
    <text evidence="1">Part of the high-affinity ATP-driven potassium transport (or Kdp) system, which catalyzes the hydrolysis of ATP coupled with the electrogenic transport of potassium into the cytoplasm. This subunit acts as a catalytic chaperone that increases the ATP-binding affinity of the ATP-hydrolyzing subunit KdpB by the formation of a transient KdpB/KdpC/ATP ternary complex.</text>
</comment>
<comment type="subunit">
    <text evidence="1">The system is composed of three essential subunits: KdpA, KdpB and KdpC.</text>
</comment>
<comment type="subcellular location">
    <subcellularLocation>
        <location evidence="1">Cell inner membrane</location>
        <topology evidence="1">Single-pass membrane protein</topology>
    </subcellularLocation>
</comment>
<comment type="similarity">
    <text evidence="1">Belongs to the KdpC family.</text>
</comment>
<evidence type="ECO:0000255" key="1">
    <source>
        <dbReference type="HAMAP-Rule" id="MF_00276"/>
    </source>
</evidence>
<keyword id="KW-0067">ATP-binding</keyword>
<keyword id="KW-0997">Cell inner membrane</keyword>
<keyword id="KW-1003">Cell membrane</keyword>
<keyword id="KW-0406">Ion transport</keyword>
<keyword id="KW-0472">Membrane</keyword>
<keyword id="KW-0547">Nucleotide-binding</keyword>
<keyword id="KW-0630">Potassium</keyword>
<keyword id="KW-0633">Potassium transport</keyword>
<keyword id="KW-0812">Transmembrane</keyword>
<keyword id="KW-1133">Transmembrane helix</keyword>
<keyword id="KW-0813">Transport</keyword>
<protein>
    <recommendedName>
        <fullName evidence="1">Potassium-transporting ATPase KdpC subunit</fullName>
    </recommendedName>
    <alternativeName>
        <fullName evidence="1">ATP phosphohydrolase [potassium-transporting] C chain</fullName>
    </alternativeName>
    <alternativeName>
        <fullName evidence="1">Potassium-binding and translocating subunit C</fullName>
    </alternativeName>
    <alternativeName>
        <fullName evidence="1">Potassium-translocating ATPase C chain</fullName>
    </alternativeName>
</protein>
<sequence length="199" mass="21149">MNSIVYTTKTQHAVMGLRASLALLFVCGVVYTGTVTQLGGALFPAQAKGSVIHRDNVAMGSEFIAQPFVNPAYFYSRPSAVDYDPMATGGSNLAPSNPALRERVMATSQEIQARESVQAADIPVDLLATSGAGLDPHISPAAAKLQVARVAQARQLAEPQVLTLVAQFIEPPQWGIFGQARVNVLKLNLALDQIAKHAQ</sequence>
<name>KDPC_SHEPC</name>
<organism>
    <name type="scientific">Shewanella putrefaciens (strain CN-32 / ATCC BAA-453)</name>
    <dbReference type="NCBI Taxonomy" id="319224"/>
    <lineage>
        <taxon>Bacteria</taxon>
        <taxon>Pseudomonadati</taxon>
        <taxon>Pseudomonadota</taxon>
        <taxon>Gammaproteobacteria</taxon>
        <taxon>Alteromonadales</taxon>
        <taxon>Shewanellaceae</taxon>
        <taxon>Shewanella</taxon>
    </lineage>
</organism>
<proteinExistence type="inferred from homology"/>